<organism>
    <name type="scientific">Brucella abortus biovar 1 (strain 9-941)</name>
    <dbReference type="NCBI Taxonomy" id="262698"/>
    <lineage>
        <taxon>Bacteria</taxon>
        <taxon>Pseudomonadati</taxon>
        <taxon>Pseudomonadota</taxon>
        <taxon>Alphaproteobacteria</taxon>
        <taxon>Hyphomicrobiales</taxon>
        <taxon>Brucellaceae</taxon>
        <taxon>Brucella/Ochrobactrum group</taxon>
        <taxon>Brucella</taxon>
    </lineage>
</organism>
<proteinExistence type="inferred from homology"/>
<reference key="1">
    <citation type="journal article" date="2005" name="J. Bacteriol.">
        <title>Completion of the genome sequence of Brucella abortus and comparison to the highly similar genomes of Brucella melitensis and Brucella suis.</title>
        <authorList>
            <person name="Halling S.M."/>
            <person name="Peterson-Burch B.D."/>
            <person name="Bricker B.J."/>
            <person name="Zuerner R.L."/>
            <person name="Qing Z."/>
            <person name="Li L.-L."/>
            <person name="Kapur V."/>
            <person name="Alt D.P."/>
            <person name="Olsen S.C."/>
        </authorList>
    </citation>
    <scope>NUCLEOTIDE SEQUENCE [LARGE SCALE GENOMIC DNA]</scope>
    <source>
        <strain>9-941</strain>
    </source>
</reference>
<accession>Q57CI7</accession>
<evidence type="ECO:0000255" key="1">
    <source>
        <dbReference type="HAMAP-Rule" id="MF_00028"/>
    </source>
</evidence>
<dbReference type="EMBL" id="AE017223">
    <property type="protein sequence ID" value="AAX74647.1"/>
    <property type="molecule type" value="Genomic_DNA"/>
</dbReference>
<dbReference type="RefSeq" id="WP_002966865.1">
    <property type="nucleotide sequence ID" value="NC_006932.1"/>
</dbReference>
<dbReference type="SMR" id="Q57CI7"/>
<dbReference type="EnsemblBacteria" id="AAX74647">
    <property type="protein sequence ID" value="AAX74647"/>
    <property type="gene ID" value="BruAb1_1312"/>
</dbReference>
<dbReference type="KEGG" id="bmb:BruAb1_1312"/>
<dbReference type="HOGENOM" id="CLU_019250_2_2_5"/>
<dbReference type="UniPathway" id="UPA00148"/>
<dbReference type="Proteomes" id="UP000000540">
    <property type="component" value="Chromosome I"/>
</dbReference>
<dbReference type="GO" id="GO:0015420">
    <property type="term" value="F:ABC-type vitamin B12 transporter activity"/>
    <property type="evidence" value="ECO:0007669"/>
    <property type="project" value="UniProtKB-UniRule"/>
</dbReference>
<dbReference type="GO" id="GO:0003824">
    <property type="term" value="F:catalytic activity"/>
    <property type="evidence" value="ECO:0007669"/>
    <property type="project" value="InterPro"/>
</dbReference>
<dbReference type="GO" id="GO:0009236">
    <property type="term" value="P:cobalamin biosynthetic process"/>
    <property type="evidence" value="ECO:0007669"/>
    <property type="project" value="UniProtKB-UniRule"/>
</dbReference>
<dbReference type="CDD" id="cd05389">
    <property type="entry name" value="CobQ_N"/>
    <property type="match status" value="1"/>
</dbReference>
<dbReference type="CDD" id="cd01750">
    <property type="entry name" value="GATase1_CobQ"/>
    <property type="match status" value="1"/>
</dbReference>
<dbReference type="Gene3D" id="3.40.50.880">
    <property type="match status" value="1"/>
</dbReference>
<dbReference type="Gene3D" id="3.40.50.300">
    <property type="entry name" value="P-loop containing nucleotide triphosphate hydrolases"/>
    <property type="match status" value="1"/>
</dbReference>
<dbReference type="HAMAP" id="MF_00028">
    <property type="entry name" value="CobQ"/>
    <property type="match status" value="1"/>
</dbReference>
<dbReference type="InterPro" id="IPR029062">
    <property type="entry name" value="Class_I_gatase-like"/>
</dbReference>
<dbReference type="InterPro" id="IPR002586">
    <property type="entry name" value="CobQ/CobB/MinD/ParA_Nub-bd_dom"/>
</dbReference>
<dbReference type="InterPro" id="IPR033949">
    <property type="entry name" value="CobQ_GATase1"/>
</dbReference>
<dbReference type="InterPro" id="IPR047045">
    <property type="entry name" value="CobQ_N"/>
</dbReference>
<dbReference type="InterPro" id="IPR004459">
    <property type="entry name" value="CobQ_synth"/>
</dbReference>
<dbReference type="InterPro" id="IPR011698">
    <property type="entry name" value="GATase_3"/>
</dbReference>
<dbReference type="InterPro" id="IPR027417">
    <property type="entry name" value="P-loop_NTPase"/>
</dbReference>
<dbReference type="NCBIfam" id="TIGR00313">
    <property type="entry name" value="cobQ"/>
    <property type="match status" value="1"/>
</dbReference>
<dbReference type="NCBIfam" id="NF001989">
    <property type="entry name" value="PRK00784.1"/>
    <property type="match status" value="1"/>
</dbReference>
<dbReference type="PANTHER" id="PTHR21343:SF1">
    <property type="entry name" value="COBYRIC ACID SYNTHASE"/>
    <property type="match status" value="1"/>
</dbReference>
<dbReference type="PANTHER" id="PTHR21343">
    <property type="entry name" value="DETHIOBIOTIN SYNTHETASE"/>
    <property type="match status" value="1"/>
</dbReference>
<dbReference type="Pfam" id="PF01656">
    <property type="entry name" value="CbiA"/>
    <property type="match status" value="1"/>
</dbReference>
<dbReference type="Pfam" id="PF07685">
    <property type="entry name" value="GATase_3"/>
    <property type="match status" value="1"/>
</dbReference>
<dbReference type="SUPFAM" id="SSF52317">
    <property type="entry name" value="Class I glutamine amidotransferase-like"/>
    <property type="match status" value="1"/>
</dbReference>
<dbReference type="SUPFAM" id="SSF52540">
    <property type="entry name" value="P-loop containing nucleoside triphosphate hydrolases"/>
    <property type="match status" value="1"/>
</dbReference>
<dbReference type="PROSITE" id="PS51274">
    <property type="entry name" value="GATASE_COBBQ"/>
    <property type="match status" value="1"/>
</dbReference>
<comment type="function">
    <text evidence="1">Catalyzes amidations at positions B, D, E, and G on adenosylcobyrinic A,C-diamide. NH(2) groups are provided by glutamine, and one molecule of ATP is hydrogenolyzed for each amidation.</text>
</comment>
<comment type="pathway">
    <text evidence="1">Cofactor biosynthesis; adenosylcobalamin biosynthesis.</text>
</comment>
<comment type="similarity">
    <text evidence="1">Belongs to the CobB/CobQ family. CobQ subfamily.</text>
</comment>
<gene>
    <name evidence="1" type="primary">cobQ</name>
    <name type="ordered locus">BruAb1_1312</name>
</gene>
<keyword id="KW-0169">Cobalamin biosynthesis</keyword>
<keyword id="KW-0315">Glutamine amidotransferase</keyword>
<protein>
    <recommendedName>
        <fullName evidence="1">Cobyric acid synthase</fullName>
    </recommendedName>
</protein>
<name>COBQ_BRUAB</name>
<feature type="chain" id="PRO_1000002349" description="Cobyric acid synthase">
    <location>
        <begin position="1"/>
        <end position="483"/>
    </location>
</feature>
<feature type="domain" description="GATase cobBQ-type" evidence="1">
    <location>
        <begin position="251"/>
        <end position="438"/>
    </location>
</feature>
<feature type="active site" description="Nucleophile" evidence="1">
    <location>
        <position position="333"/>
    </location>
</feature>
<feature type="active site" evidence="1">
    <location>
        <position position="430"/>
    </location>
</feature>
<sequence length="483" mass="51631">MARAIMFQGTGSDVGKSVLVAGLCRVARNRGLKVRPFKPQNMSNNAAVSDDGGEIGRAQWLQALACGVPSSVHMNPVLLKPQTDMGSQLIVQGQVRGEARGRYYQELKPQLMAAVMESFAKVGDGADLVLVEGAGSPAEINLRAGDIANMGFATHADVPVVLVGDIDRGGVIASLVGTHTILPQEDRAMVRGFLINKFRGDISLFDDGLAAITRFTGWRSFGVVPWLKAVSRLPAEDSVVLERAVRGDKKALIVAVPMLPRIANFDDLDPLKAEPAVEVVMVPPGSSLPADAGLVVLPGTKSTIADLLALRENGWDRELVAHVKRGGHVLGICGGFQMLGRRISDPAGIEGNVRDIEGLGLLDIETMTEPEKVVRNVEAVSLLHDEPLEGYEIHIGRTSGPDMARPFARIGDHDDGAVSPDGRIMGTYLHGIFSADRFRHHFLRALGVEGGQMNYRESVEEALGELAEGLEASLDIDGLFALA</sequence>